<evidence type="ECO:0000250" key="1"/>
<evidence type="ECO:0000256" key="2">
    <source>
        <dbReference type="SAM" id="MobiDB-lite"/>
    </source>
</evidence>
<evidence type="ECO:0000269" key="3">
    <source>
    </source>
</evidence>
<evidence type="ECO:0000305" key="4"/>
<name>H33_TETPY</name>
<sequence length="136" mass="15519">MARTKQTARKSTGVKAPRKQLATKAARKSAPVSGGVKKPHKFRPGTVALREIRKYQKTTDLLIRKLPFQRLVRDIAMEMKNDIRFQSQAILALQEAAEAYLVGLFEDTNLCAIHARRVTIMTKDMQLARRIRGERF</sequence>
<comment type="function">
    <text evidence="1">Macronuclear replacement variant which replaces conventional H3 in a subset of nucleosomes. Nucleosomes wrap and compact DNA into chromatin, limiting DNA accessibility to the cellular machineries which require DNA as a template. Histones thereby play a central role in transcription regulation, DNA repair, DNA replication and chromosomal stability. DNA accessibility is regulated via a complex set of post-translational modifications of histones, also called histone code, and nucleosome remodeling. Functions redundantly to H3.4. H3.3 deposition into chromatin is mainly transcription-associated and DNA replication-independent, but it can also enter a replication-coupled pathway. Although not essential for vegetative growth, minor H3 variants are required for producing viable conjugation progeny by affecting late developmental stages of conjugation (By similarity).</text>
</comment>
<comment type="subunit">
    <text>The nucleosome is a histone octamer containing two molecules each of H2A, H2B, H3 and H4 assembled in one H3-H4 heterotetramer and two H2A-H2B heterodimers. The octamer wraps approximately 147 bp of DNA.</text>
</comment>
<comment type="subcellular location">
    <subcellularLocation>
        <location>Nucleus</location>
    </subcellularLocation>
    <subcellularLocation>
        <location evidence="1">Chromosome</location>
    </subcellularLocation>
    <text evidence="1">Localizes mainly to the large, transcriptionally active, somatic macronucleus (MAC) and only faintly to the small, transcriptionally inert, germ line micronucleus (MIC).</text>
</comment>
<comment type="PTM">
    <text evidence="1">Acetylated. Acetylation occurs almost exclusively in the MAC (By similarity).</text>
</comment>
<comment type="similarity">
    <text evidence="4">Belongs to the histone H3 family.</text>
</comment>
<protein>
    <recommendedName>
        <fullName>Histone H3.3</fullName>
    </recommendedName>
    <alternativeName>
        <fullName>H3.2</fullName>
    </alternativeName>
    <alternativeName>
        <fullName>Minor histone H3 variant</fullName>
    </alternativeName>
    <alternativeName>
        <fullName>hv2</fullName>
    </alternativeName>
</protein>
<proteinExistence type="evidence at protein level"/>
<accession>P15512</accession>
<organism>
    <name type="scientific">Tetrahymena pyriformis</name>
    <dbReference type="NCBI Taxonomy" id="5908"/>
    <lineage>
        <taxon>Eukaryota</taxon>
        <taxon>Sar</taxon>
        <taxon>Alveolata</taxon>
        <taxon>Ciliophora</taxon>
        <taxon>Intramacronucleata</taxon>
        <taxon>Oligohymenophorea</taxon>
        <taxon>Hymenostomatida</taxon>
        <taxon>Tetrahymenina</taxon>
        <taxon>Tetrahymenidae</taxon>
        <taxon>Tetrahymena</taxon>
    </lineage>
</organism>
<keyword id="KW-0158">Chromosome</keyword>
<keyword id="KW-0903">Direct protein sequencing</keyword>
<keyword id="KW-0238">DNA-binding</keyword>
<keyword id="KW-0544">Nucleosome core</keyword>
<keyword id="KW-0539">Nucleus</keyword>
<reference key="1">
    <citation type="journal article" date="1984" name="J. Biochem.">
        <title>Tetrahymena histone H3. Purification and two variant sequences.</title>
        <authorList>
            <person name="Hayashi T."/>
            <person name="Hayashi H."/>
            <person name="Fusauchi Y."/>
            <person name="Iwai K."/>
        </authorList>
    </citation>
    <scope>PROTEIN SEQUENCE OF 2-136</scope>
</reference>
<feature type="initiator methionine" description="Removed" evidence="3">
    <location>
        <position position="1"/>
    </location>
</feature>
<feature type="chain" id="PRO_0000221347" description="Histone H3.3">
    <location>
        <begin position="2"/>
        <end position="136"/>
    </location>
</feature>
<feature type="region of interest" description="Disordered" evidence="2">
    <location>
        <begin position="1"/>
        <end position="41"/>
    </location>
</feature>
<dbReference type="PIR" id="B28852">
    <property type="entry name" value="B28852"/>
</dbReference>
<dbReference type="SMR" id="P15512"/>
<dbReference type="GO" id="GO:0000786">
    <property type="term" value="C:nucleosome"/>
    <property type="evidence" value="ECO:0007669"/>
    <property type="project" value="UniProtKB-KW"/>
</dbReference>
<dbReference type="GO" id="GO:0005634">
    <property type="term" value="C:nucleus"/>
    <property type="evidence" value="ECO:0007669"/>
    <property type="project" value="UniProtKB-SubCell"/>
</dbReference>
<dbReference type="GO" id="GO:0003677">
    <property type="term" value="F:DNA binding"/>
    <property type="evidence" value="ECO:0007669"/>
    <property type="project" value="UniProtKB-KW"/>
</dbReference>
<dbReference type="GO" id="GO:0046982">
    <property type="term" value="F:protein heterodimerization activity"/>
    <property type="evidence" value="ECO:0007669"/>
    <property type="project" value="InterPro"/>
</dbReference>
<dbReference type="GO" id="GO:0030527">
    <property type="term" value="F:structural constituent of chromatin"/>
    <property type="evidence" value="ECO:0007669"/>
    <property type="project" value="InterPro"/>
</dbReference>
<dbReference type="CDD" id="cd22911">
    <property type="entry name" value="HFD_H3"/>
    <property type="match status" value="1"/>
</dbReference>
<dbReference type="FunFam" id="1.10.20.10:FF:000001">
    <property type="entry name" value="Histone H3"/>
    <property type="match status" value="1"/>
</dbReference>
<dbReference type="Gene3D" id="1.10.20.10">
    <property type="entry name" value="Histone, subunit A"/>
    <property type="match status" value="1"/>
</dbReference>
<dbReference type="InterPro" id="IPR009072">
    <property type="entry name" value="Histone-fold"/>
</dbReference>
<dbReference type="InterPro" id="IPR007125">
    <property type="entry name" value="Histone_H2A/H2B/H3"/>
</dbReference>
<dbReference type="InterPro" id="IPR000164">
    <property type="entry name" value="Histone_H3/CENP-A"/>
</dbReference>
<dbReference type="PANTHER" id="PTHR11426">
    <property type="entry name" value="HISTONE H3"/>
    <property type="match status" value="1"/>
</dbReference>
<dbReference type="Pfam" id="PF00125">
    <property type="entry name" value="Histone"/>
    <property type="match status" value="1"/>
</dbReference>
<dbReference type="PRINTS" id="PR00622">
    <property type="entry name" value="HISTONEH3"/>
</dbReference>
<dbReference type="SMART" id="SM00428">
    <property type="entry name" value="H3"/>
    <property type="match status" value="1"/>
</dbReference>
<dbReference type="SUPFAM" id="SSF47113">
    <property type="entry name" value="Histone-fold"/>
    <property type="match status" value="1"/>
</dbReference>
<dbReference type="PROSITE" id="PS00322">
    <property type="entry name" value="HISTONE_H3_1"/>
    <property type="match status" value="1"/>
</dbReference>
<dbReference type="PROSITE" id="PS00959">
    <property type="entry name" value="HISTONE_H3_2"/>
    <property type="match status" value="1"/>
</dbReference>